<protein>
    <recommendedName>
        <fullName>Duplicate procyclin</fullName>
    </recommendedName>
</protein>
<sequence length="99" mass="12132">MKGTFSKGFVPPRRFTRLHPLRMRQREQQPRLRTEVQRISALQHQVQVRVRVQVQVQVRVQVRVQVRVQVRVRVQGRGQCHWYRRRRPWFPSRLCLCLP</sequence>
<feature type="chain" id="PRO_0000058580" description="Duplicate procyclin">
    <location>
        <begin position="1"/>
        <end position="99"/>
    </location>
</feature>
<reference key="1">
    <citation type="journal article" date="1989" name="Nucleic Acids Res.">
        <title>Duplication and transcription of procyclin genes in Trypanosoma brucei.</title>
        <authorList>
            <person name="Koenig E."/>
            <person name="Delius H."/>
            <person name="Carrington M."/>
            <person name="Williams R.O."/>
            <person name="Roditi I."/>
        </authorList>
    </citation>
    <scope>NUCLEOTIDE SEQUENCE [GENOMIC DNA]</scope>
    <source>
        <strain>227(ILTAT1)</strain>
    </source>
</reference>
<accession>P14044</accession>
<name>PRO2_TRYBB</name>
<dbReference type="EMBL" id="X16015">
    <property type="protein sequence ID" value="CAA34148.1"/>
    <property type="molecule type" value="Genomic_DNA"/>
</dbReference>
<dbReference type="PIR" id="S14897">
    <property type="entry name" value="S14897"/>
</dbReference>
<proteinExistence type="predicted"/>
<keyword id="KW-0677">Repeat</keyword>
<organism>
    <name type="scientific">Trypanosoma brucei brucei</name>
    <dbReference type="NCBI Taxonomy" id="5702"/>
    <lineage>
        <taxon>Eukaryota</taxon>
        <taxon>Discoba</taxon>
        <taxon>Euglenozoa</taxon>
        <taxon>Kinetoplastea</taxon>
        <taxon>Metakinetoplastina</taxon>
        <taxon>Trypanosomatida</taxon>
        <taxon>Trypanosomatidae</taxon>
        <taxon>Trypanosoma</taxon>
    </lineage>
</organism>